<reference key="1">
    <citation type="journal article" date="1996" name="Mol. Cell. Biol.">
        <title>Identification of a positive regulator of the cell cycle ubiquitin-conjugating enzyme Cdc34 (Ubc3).</title>
        <authorList>
            <person name="Prendergast J.A."/>
            <person name="Ptak C."/>
            <person name="Kornitzer D."/>
            <person name="Steussy C.N."/>
            <person name="Hodgins R."/>
            <person name="Goebl M."/>
            <person name="Ellison M.J."/>
        </authorList>
    </citation>
    <scope>NUCLEOTIDE SEQUENCE [GENOMIC DNA]</scope>
</reference>
<reference key="2">
    <citation type="journal article" date="1994" name="EMBO J.">
        <title>Complete DNA sequence of yeast chromosome II.</title>
        <authorList>
            <person name="Feldmann H."/>
            <person name="Aigle M."/>
            <person name="Aljinovic G."/>
            <person name="Andre B."/>
            <person name="Baclet M.C."/>
            <person name="Barthe C."/>
            <person name="Baur A."/>
            <person name="Becam A.-M."/>
            <person name="Biteau N."/>
            <person name="Boles E."/>
            <person name="Brandt T."/>
            <person name="Brendel M."/>
            <person name="Brueckner M."/>
            <person name="Bussereau F."/>
            <person name="Christiansen C."/>
            <person name="Contreras R."/>
            <person name="Crouzet M."/>
            <person name="Cziepluch C."/>
            <person name="Demolis N."/>
            <person name="Delaveau T."/>
            <person name="Doignon F."/>
            <person name="Domdey H."/>
            <person name="Duesterhus S."/>
            <person name="Dubois E."/>
            <person name="Dujon B."/>
            <person name="El Bakkoury M."/>
            <person name="Entian K.-D."/>
            <person name="Feuermann M."/>
            <person name="Fiers W."/>
            <person name="Fobo G.M."/>
            <person name="Fritz C."/>
            <person name="Gassenhuber J."/>
            <person name="Glansdorff N."/>
            <person name="Goffeau A."/>
            <person name="Grivell L.A."/>
            <person name="de Haan M."/>
            <person name="Hein C."/>
            <person name="Herbert C.J."/>
            <person name="Hollenberg C.P."/>
            <person name="Holmstroem K."/>
            <person name="Jacq C."/>
            <person name="Jacquet M."/>
            <person name="Jauniaux J.-C."/>
            <person name="Jonniaux J.-L."/>
            <person name="Kallesoee T."/>
            <person name="Kiesau P."/>
            <person name="Kirchrath L."/>
            <person name="Koetter P."/>
            <person name="Korol S."/>
            <person name="Liebl S."/>
            <person name="Logghe M."/>
            <person name="Lohan A.J.E."/>
            <person name="Louis E.J."/>
            <person name="Li Z.Y."/>
            <person name="Maat M.J."/>
            <person name="Mallet L."/>
            <person name="Mannhaupt G."/>
            <person name="Messenguy F."/>
            <person name="Miosga T."/>
            <person name="Molemans F."/>
            <person name="Mueller S."/>
            <person name="Nasr F."/>
            <person name="Obermaier B."/>
            <person name="Perea J."/>
            <person name="Pierard A."/>
            <person name="Piravandi E."/>
            <person name="Pohl F.M."/>
            <person name="Pohl T.M."/>
            <person name="Potier S."/>
            <person name="Proft M."/>
            <person name="Purnelle B."/>
            <person name="Ramezani Rad M."/>
            <person name="Rieger M."/>
            <person name="Rose M."/>
            <person name="Schaaff-Gerstenschlaeger I."/>
            <person name="Scherens B."/>
            <person name="Schwarzlose C."/>
            <person name="Skala J."/>
            <person name="Slonimski P.P."/>
            <person name="Smits P.H.M."/>
            <person name="Souciet J.-L."/>
            <person name="Steensma H.Y."/>
            <person name="Stucka R."/>
            <person name="Urrestarazu L.A."/>
            <person name="van der Aart Q.J.M."/>
            <person name="Van Dyck L."/>
            <person name="Vassarotti A."/>
            <person name="Vetter I."/>
            <person name="Vierendeels F."/>
            <person name="Vissers S."/>
            <person name="Wagner G."/>
            <person name="de Wergifosse P."/>
            <person name="Wolfe K.H."/>
            <person name="Zagulski M."/>
            <person name="Zimmermann F.K."/>
            <person name="Mewes H.-W."/>
            <person name="Kleine K."/>
        </authorList>
    </citation>
    <scope>NUCLEOTIDE SEQUENCE [LARGE SCALE GENOMIC DNA]</scope>
    <source>
        <strain>ATCC 204508 / S288c</strain>
    </source>
</reference>
<reference key="3">
    <citation type="journal article" date="2014" name="G3 (Bethesda)">
        <title>The reference genome sequence of Saccharomyces cerevisiae: Then and now.</title>
        <authorList>
            <person name="Engel S.R."/>
            <person name="Dietrich F.S."/>
            <person name="Fisk D.G."/>
            <person name="Binkley G."/>
            <person name="Balakrishnan R."/>
            <person name="Costanzo M.C."/>
            <person name="Dwight S.S."/>
            <person name="Hitz B.C."/>
            <person name="Karra K."/>
            <person name="Nash R.S."/>
            <person name="Weng S."/>
            <person name="Wong E.D."/>
            <person name="Lloyd P."/>
            <person name="Skrzypek M.S."/>
            <person name="Miyasato S.R."/>
            <person name="Simison M."/>
            <person name="Cherry J.M."/>
        </authorList>
    </citation>
    <scope>GENOME REANNOTATION</scope>
    <source>
        <strain>ATCC 204508 / S288c</strain>
    </source>
</reference>
<reference key="4">
    <citation type="journal article" date="2007" name="Genome Res.">
        <title>Approaching a complete repository of sequence-verified protein-encoding clones for Saccharomyces cerevisiae.</title>
        <authorList>
            <person name="Hu Y."/>
            <person name="Rolfs A."/>
            <person name="Bhullar B."/>
            <person name="Murthy T.V.S."/>
            <person name="Zhu C."/>
            <person name="Berger M.F."/>
            <person name="Camargo A.A."/>
            <person name="Kelley F."/>
            <person name="McCarron S."/>
            <person name="Jepson D."/>
            <person name="Richardson A."/>
            <person name="Raphael J."/>
            <person name="Moreira D."/>
            <person name="Taycher E."/>
            <person name="Zuo D."/>
            <person name="Mohr S."/>
            <person name="Kane M.F."/>
            <person name="Williamson J."/>
            <person name="Simpson A.J.G."/>
            <person name="Bulyk M.L."/>
            <person name="Harlow E."/>
            <person name="Marsischky G."/>
            <person name="Kolodner R.D."/>
            <person name="LaBaer J."/>
        </authorList>
    </citation>
    <scope>NUCLEOTIDE SEQUENCE [GENOMIC DNA]</scope>
    <source>
        <strain>ATCC 204508 / S288c</strain>
    </source>
</reference>
<name>UBS1_YEAST</name>
<comment type="function">
    <text>Not known; its elevated expression suppresses the conditional cell cycle defects associated with UBC3/CDC34 mutations.</text>
</comment>
<accession>P38290</accession>
<accession>D6VQG1</accession>
<proteinExistence type="predicted"/>
<keyword id="KW-1185">Reference proteome</keyword>
<gene>
    <name type="primary">UBS1</name>
    <name type="ordered locus">YBR165W</name>
    <name type="ORF">YBR1217</name>
</gene>
<protein>
    <recommendedName>
        <fullName>Ubiquitin-conjugating enzyme suppressor 1</fullName>
    </recommendedName>
</protein>
<dbReference type="EMBL" id="S80871">
    <property type="protein sequence ID" value="AAB50693.1"/>
    <property type="molecule type" value="Genomic_DNA"/>
</dbReference>
<dbReference type="EMBL" id="Z36034">
    <property type="protein sequence ID" value="CAA85126.1"/>
    <property type="molecule type" value="Genomic_DNA"/>
</dbReference>
<dbReference type="EMBL" id="AY557716">
    <property type="protein sequence ID" value="AAS56042.1"/>
    <property type="molecule type" value="Genomic_DNA"/>
</dbReference>
<dbReference type="EMBL" id="BK006936">
    <property type="protein sequence ID" value="DAA07281.1"/>
    <property type="molecule type" value="Genomic_DNA"/>
</dbReference>
<dbReference type="PIR" id="S46036">
    <property type="entry name" value="S46036"/>
</dbReference>
<dbReference type="RefSeq" id="NP_009724.1">
    <property type="nucleotide sequence ID" value="NM_001178513.1"/>
</dbReference>
<dbReference type="SMR" id="P38290"/>
<dbReference type="BioGRID" id="32865">
    <property type="interactions" value="66"/>
</dbReference>
<dbReference type="FunCoup" id="P38290">
    <property type="interactions" value="49"/>
</dbReference>
<dbReference type="STRING" id="4932.YBR165W"/>
<dbReference type="PaxDb" id="4932-YBR165W"/>
<dbReference type="PeptideAtlas" id="P38290"/>
<dbReference type="EnsemblFungi" id="YBR165W_mRNA">
    <property type="protein sequence ID" value="YBR165W"/>
    <property type="gene ID" value="YBR165W"/>
</dbReference>
<dbReference type="GeneID" id="852463"/>
<dbReference type="KEGG" id="sce:YBR165W"/>
<dbReference type="AGR" id="SGD:S000000369"/>
<dbReference type="SGD" id="S000000369">
    <property type="gene designation" value="UBS1"/>
</dbReference>
<dbReference type="VEuPathDB" id="FungiDB:YBR165W"/>
<dbReference type="eggNOG" id="ENOG502S1UD">
    <property type="taxonomic scope" value="Eukaryota"/>
</dbReference>
<dbReference type="HOGENOM" id="CLU_085772_0_0_1"/>
<dbReference type="InParanoid" id="P38290"/>
<dbReference type="OMA" id="RTHDYNA"/>
<dbReference type="OrthoDB" id="4064925at2759"/>
<dbReference type="BioCyc" id="YEAST:G3O-29115-MONOMER"/>
<dbReference type="BioGRID-ORCS" id="852463">
    <property type="hits" value="1 hit in 10 CRISPR screens"/>
</dbReference>
<dbReference type="PRO" id="PR:P38290"/>
<dbReference type="Proteomes" id="UP000002311">
    <property type="component" value="Chromosome II"/>
</dbReference>
<dbReference type="RNAct" id="P38290">
    <property type="molecule type" value="protein"/>
</dbReference>
<dbReference type="GO" id="GO:0005634">
    <property type="term" value="C:nucleus"/>
    <property type="evidence" value="ECO:0000314"/>
    <property type="project" value="SGD"/>
</dbReference>
<dbReference type="GO" id="GO:0006611">
    <property type="term" value="P:protein export from nucleus"/>
    <property type="evidence" value="ECO:0000315"/>
    <property type="project" value="SGD"/>
</dbReference>
<dbReference type="GO" id="GO:0016567">
    <property type="term" value="P:protein ubiquitination"/>
    <property type="evidence" value="ECO:0000315"/>
    <property type="project" value="SGD"/>
</dbReference>
<organism>
    <name type="scientific">Saccharomyces cerevisiae (strain ATCC 204508 / S288c)</name>
    <name type="common">Baker's yeast</name>
    <dbReference type="NCBI Taxonomy" id="559292"/>
    <lineage>
        <taxon>Eukaryota</taxon>
        <taxon>Fungi</taxon>
        <taxon>Dikarya</taxon>
        <taxon>Ascomycota</taxon>
        <taxon>Saccharomycotina</taxon>
        <taxon>Saccharomycetes</taxon>
        <taxon>Saccharomycetales</taxon>
        <taxon>Saccharomycetaceae</taxon>
        <taxon>Saccharomyces</taxon>
    </lineage>
</organism>
<evidence type="ECO:0000256" key="1">
    <source>
        <dbReference type="SAM" id="MobiDB-lite"/>
    </source>
</evidence>
<feature type="chain" id="PRO_0000065713" description="Ubiquitin-conjugating enzyme suppressor 1">
    <location>
        <begin position="1"/>
        <end position="277"/>
    </location>
</feature>
<feature type="region of interest" description="Disordered" evidence="1">
    <location>
        <begin position="254"/>
        <end position="277"/>
    </location>
</feature>
<sequence length="277" mass="32197">MAYSLTRKLLKDWKYFMRHPEKTQGLFHVRPHDSDLHLWHVVMYEPRTSLEVYLLLYIGGNDQDPYIIMKCLSPNCCFPINRTVSMTHLNYLLLKDLGLQDLLFHIWQPLFHIQATEDLQYSPSTVKFNRAWNRIIYKDFKSYFPELIGTLQPGDYSIVKSYSKNHNISNSNGGSVNEFMSSYNAQSHTFHAQDNSKNPYTNSSIGKSSMLSTLNNNNVNKRTHDYNAIDFMTKNLLACDDDSIHPVVSSKRSRTLACPDETNDNRGSEHYTKRKKI</sequence>